<evidence type="ECO:0000255" key="1">
    <source>
        <dbReference type="HAMAP-Rule" id="MF_00142"/>
    </source>
</evidence>
<protein>
    <recommendedName>
        <fullName evidence="1">Iron-sulfur cluster assembly protein CyaY</fullName>
    </recommendedName>
</protein>
<feature type="chain" id="PRO_1000010929" description="Iron-sulfur cluster assembly protein CyaY">
    <location>
        <begin position="1"/>
        <end position="106"/>
    </location>
</feature>
<proteinExistence type="inferred from homology"/>
<keyword id="KW-0408">Iron</keyword>
<keyword id="KW-0479">Metal-binding</keyword>
<reference key="1">
    <citation type="journal article" date="2006" name="Proc. Natl. Acad. Sci. U.S.A.">
        <title>Identification of genes subject to positive selection in uropathogenic strains of Escherichia coli: a comparative genomics approach.</title>
        <authorList>
            <person name="Chen S.L."/>
            <person name="Hung C.-S."/>
            <person name="Xu J."/>
            <person name="Reigstad C.S."/>
            <person name="Magrini V."/>
            <person name="Sabo A."/>
            <person name="Blasiar D."/>
            <person name="Bieri T."/>
            <person name="Meyer R.R."/>
            <person name="Ozersky P."/>
            <person name="Armstrong J.R."/>
            <person name="Fulton R.S."/>
            <person name="Latreille J.P."/>
            <person name="Spieth J."/>
            <person name="Hooton T.M."/>
            <person name="Mardis E.R."/>
            <person name="Hultgren S.J."/>
            <person name="Gordon J.I."/>
        </authorList>
    </citation>
    <scope>NUCLEOTIDE SEQUENCE [LARGE SCALE GENOMIC DNA]</scope>
    <source>
        <strain>UTI89 / UPEC</strain>
    </source>
</reference>
<organism>
    <name type="scientific">Escherichia coli (strain UTI89 / UPEC)</name>
    <dbReference type="NCBI Taxonomy" id="364106"/>
    <lineage>
        <taxon>Bacteria</taxon>
        <taxon>Pseudomonadati</taxon>
        <taxon>Pseudomonadota</taxon>
        <taxon>Gammaproteobacteria</taxon>
        <taxon>Enterobacterales</taxon>
        <taxon>Enterobacteriaceae</taxon>
        <taxon>Escherichia</taxon>
    </lineage>
</organism>
<accession>Q1R4D1</accession>
<name>CYAY_ECOUT</name>
<dbReference type="EMBL" id="CP000243">
    <property type="protein sequence ID" value="ABE09783.1"/>
    <property type="molecule type" value="Genomic_DNA"/>
</dbReference>
<dbReference type="RefSeq" id="WP_000999936.1">
    <property type="nucleotide sequence ID" value="NZ_CP064825.1"/>
</dbReference>
<dbReference type="SMR" id="Q1R4D1"/>
<dbReference type="KEGG" id="eci:UTI89_C4366"/>
<dbReference type="HOGENOM" id="CLU_080880_3_0_6"/>
<dbReference type="Proteomes" id="UP000001952">
    <property type="component" value="Chromosome"/>
</dbReference>
<dbReference type="GO" id="GO:0005829">
    <property type="term" value="C:cytosol"/>
    <property type="evidence" value="ECO:0007669"/>
    <property type="project" value="TreeGrafter"/>
</dbReference>
<dbReference type="GO" id="GO:0008199">
    <property type="term" value="F:ferric iron binding"/>
    <property type="evidence" value="ECO:0007669"/>
    <property type="project" value="InterPro"/>
</dbReference>
<dbReference type="GO" id="GO:0008198">
    <property type="term" value="F:ferrous iron binding"/>
    <property type="evidence" value="ECO:0007669"/>
    <property type="project" value="TreeGrafter"/>
</dbReference>
<dbReference type="GO" id="GO:0016226">
    <property type="term" value="P:iron-sulfur cluster assembly"/>
    <property type="evidence" value="ECO:0007669"/>
    <property type="project" value="UniProtKB-UniRule"/>
</dbReference>
<dbReference type="CDD" id="cd00503">
    <property type="entry name" value="Frataxin"/>
    <property type="match status" value="1"/>
</dbReference>
<dbReference type="FunFam" id="3.30.920.10:FF:000001">
    <property type="entry name" value="Iron-sulfur cluster assembly protein CyaY"/>
    <property type="match status" value="1"/>
</dbReference>
<dbReference type="Gene3D" id="3.30.920.10">
    <property type="entry name" value="Frataxin/CyaY"/>
    <property type="match status" value="1"/>
</dbReference>
<dbReference type="HAMAP" id="MF_00142">
    <property type="entry name" value="CyaY"/>
    <property type="match status" value="1"/>
</dbReference>
<dbReference type="InterPro" id="IPR047584">
    <property type="entry name" value="CyaY"/>
</dbReference>
<dbReference type="InterPro" id="IPR002908">
    <property type="entry name" value="Frataxin/CyaY"/>
</dbReference>
<dbReference type="InterPro" id="IPR036524">
    <property type="entry name" value="Frataxin/CyaY_sf"/>
</dbReference>
<dbReference type="InterPro" id="IPR020895">
    <property type="entry name" value="Frataxin_CS"/>
</dbReference>
<dbReference type="NCBIfam" id="TIGR03421">
    <property type="entry name" value="FeS_CyaY"/>
    <property type="match status" value="1"/>
</dbReference>
<dbReference type="PANTHER" id="PTHR16821">
    <property type="entry name" value="FRATAXIN"/>
    <property type="match status" value="1"/>
</dbReference>
<dbReference type="PANTHER" id="PTHR16821:SF2">
    <property type="entry name" value="FRATAXIN, MITOCHONDRIAL"/>
    <property type="match status" value="1"/>
</dbReference>
<dbReference type="Pfam" id="PF01491">
    <property type="entry name" value="Frataxin_Cyay"/>
    <property type="match status" value="1"/>
</dbReference>
<dbReference type="SMART" id="SM01219">
    <property type="entry name" value="Frataxin_Cyay"/>
    <property type="match status" value="1"/>
</dbReference>
<dbReference type="SUPFAM" id="SSF55387">
    <property type="entry name" value="Frataxin/Nqo15-like"/>
    <property type="match status" value="1"/>
</dbReference>
<dbReference type="PROSITE" id="PS01344">
    <property type="entry name" value="FRATAXIN_1"/>
    <property type="match status" value="1"/>
</dbReference>
<dbReference type="PROSITE" id="PS50810">
    <property type="entry name" value="FRATAXIN_2"/>
    <property type="match status" value="1"/>
</dbReference>
<sequence length="106" mass="12212">MNDSEFHRLADQLWLTIEEHLDDWDGDSDIDCEINGGVLTITFENGSKIIINRQEPLHQVWLATKQGGYHFDLKGDEWICDRSGETFWDLLEQAATQQAGETVSFR</sequence>
<comment type="function">
    <text evidence="1">Involved in iron-sulfur (Fe-S) cluster assembly. May act as a regulator of Fe-S biogenesis.</text>
</comment>
<comment type="similarity">
    <text evidence="1">Belongs to the frataxin family.</text>
</comment>
<gene>
    <name evidence="1" type="primary">cyaY</name>
    <name type="ordered locus">UTI89_C4366</name>
</gene>